<reference key="1">
    <citation type="journal article" date="2003" name="Proc. Natl. Acad. Sci. U.S.A.">
        <title>The complete genome sequence of the carcinogenic bacterium Helicobacter hepaticus.</title>
        <authorList>
            <person name="Suerbaum S."/>
            <person name="Josenhans C."/>
            <person name="Sterzenbach T."/>
            <person name="Drescher B."/>
            <person name="Brandt P."/>
            <person name="Bell M."/>
            <person name="Droege M."/>
            <person name="Fartmann B."/>
            <person name="Fischer H.-P."/>
            <person name="Ge Z."/>
            <person name="Hoerster A."/>
            <person name="Holland R."/>
            <person name="Klein K."/>
            <person name="Koenig J."/>
            <person name="Macko L."/>
            <person name="Mendz G.L."/>
            <person name="Nyakatura G."/>
            <person name="Schauer D.B."/>
            <person name="Shen Z."/>
            <person name="Weber J."/>
            <person name="Frosch M."/>
            <person name="Fox J.G."/>
        </authorList>
    </citation>
    <scope>NUCLEOTIDE SEQUENCE [LARGE SCALE GENOMIC DNA]</scope>
    <source>
        <strain>ATCC 51449 / 3B1</strain>
    </source>
</reference>
<evidence type="ECO:0000255" key="1">
    <source>
        <dbReference type="HAMAP-Rule" id="MF_00279"/>
    </source>
</evidence>
<feature type="chain" id="PRO_0000231812" description="Pyridoxine 5'-phosphate synthase">
    <location>
        <begin position="1"/>
        <end position="267"/>
    </location>
</feature>
<feature type="active site" description="Proton acceptor" evidence="1">
    <location>
        <position position="44"/>
    </location>
</feature>
<feature type="active site" description="Proton acceptor" evidence="1">
    <location>
        <position position="71"/>
    </location>
</feature>
<feature type="active site" description="Proton donor" evidence="1">
    <location>
        <position position="219"/>
    </location>
</feature>
<feature type="binding site" evidence="1">
    <location>
        <position position="8"/>
    </location>
    <ligand>
        <name>3-amino-2-oxopropyl phosphate</name>
        <dbReference type="ChEBI" id="CHEBI:57279"/>
    </ligand>
</feature>
<feature type="binding site" evidence="1">
    <location>
        <begin position="10"/>
        <end position="11"/>
    </location>
    <ligand>
        <name>1-deoxy-D-xylulose 5-phosphate</name>
        <dbReference type="ChEBI" id="CHEBI:57792"/>
    </ligand>
</feature>
<feature type="binding site" evidence="1">
    <location>
        <position position="19"/>
    </location>
    <ligand>
        <name>3-amino-2-oxopropyl phosphate</name>
        <dbReference type="ChEBI" id="CHEBI:57279"/>
    </ligand>
</feature>
<feature type="binding site" evidence="1">
    <location>
        <position position="46"/>
    </location>
    <ligand>
        <name>1-deoxy-D-xylulose 5-phosphate</name>
        <dbReference type="ChEBI" id="CHEBI:57792"/>
    </ligand>
</feature>
<feature type="binding site" evidence="1">
    <location>
        <position position="51"/>
    </location>
    <ligand>
        <name>1-deoxy-D-xylulose 5-phosphate</name>
        <dbReference type="ChEBI" id="CHEBI:57792"/>
    </ligand>
</feature>
<feature type="binding site" evidence="1">
    <location>
        <position position="101"/>
    </location>
    <ligand>
        <name>1-deoxy-D-xylulose 5-phosphate</name>
        <dbReference type="ChEBI" id="CHEBI:57792"/>
    </ligand>
</feature>
<feature type="binding site" evidence="1">
    <location>
        <position position="220"/>
    </location>
    <ligand>
        <name>3-amino-2-oxopropyl phosphate</name>
        <dbReference type="ChEBI" id="CHEBI:57279"/>
    </ligand>
</feature>
<feature type="binding site" evidence="1">
    <location>
        <begin position="241"/>
        <end position="242"/>
    </location>
    <ligand>
        <name>3-amino-2-oxopropyl phosphate</name>
        <dbReference type="ChEBI" id="CHEBI:57279"/>
    </ligand>
</feature>
<feature type="site" description="Transition state stabilizer" evidence="1">
    <location>
        <position position="152"/>
    </location>
</feature>
<comment type="function">
    <text evidence="1">Catalyzes the complicated ring closure reaction between the two acyclic compounds 1-deoxy-D-xylulose-5-phosphate (DXP) and 3-amino-2-oxopropyl phosphate (1-amino-acetone-3-phosphate or AAP) to form pyridoxine 5'-phosphate (PNP) and inorganic phosphate.</text>
</comment>
<comment type="catalytic activity">
    <reaction evidence="1">
        <text>3-amino-2-oxopropyl phosphate + 1-deoxy-D-xylulose 5-phosphate = pyridoxine 5'-phosphate + phosphate + 2 H2O + H(+)</text>
        <dbReference type="Rhea" id="RHEA:15265"/>
        <dbReference type="ChEBI" id="CHEBI:15377"/>
        <dbReference type="ChEBI" id="CHEBI:15378"/>
        <dbReference type="ChEBI" id="CHEBI:43474"/>
        <dbReference type="ChEBI" id="CHEBI:57279"/>
        <dbReference type="ChEBI" id="CHEBI:57792"/>
        <dbReference type="ChEBI" id="CHEBI:58589"/>
        <dbReference type="EC" id="2.6.99.2"/>
    </reaction>
</comment>
<comment type="pathway">
    <text evidence="1">Cofactor biosynthesis; pyridoxine 5'-phosphate biosynthesis; pyridoxine 5'-phosphate from D-erythrose 4-phosphate: step 5/5.</text>
</comment>
<comment type="subunit">
    <text evidence="1">Homooctamer; tetramer of dimers.</text>
</comment>
<comment type="subcellular location">
    <subcellularLocation>
        <location evidence="1">Cytoplasm</location>
    </subcellularLocation>
</comment>
<comment type="similarity">
    <text evidence="1">Belongs to the PNP synthase family.</text>
</comment>
<sequence>MSIRLGVNIDHIATLREARAIYEPDPLEAVFIAKNAGAHQITFHLREDRRHIHDSDVKRIIQSSPLPINIECALDEKIIDYLCGLKPQRITLVPEKREEITTEGGLDIESRYDSIRDTLKAFESCGIVSALFIDPKKESIFLARELGAQAVELHTGRYANLMLMAYSNLSRTHRALEEFAFPTQEINEEISRTLDDIAQCAKLATSTIDTRPLECFAGHGLNYQNVGAIAQIPQISELNIGHSIIARSVFVGLERAIIQMREAMCQK</sequence>
<gene>
    <name evidence="1" type="primary">pdxJ</name>
    <name type="ordered locus">HH_0862</name>
</gene>
<accession>Q7VHV1</accession>
<organism>
    <name type="scientific">Helicobacter hepaticus (strain ATCC 51449 / 3B1)</name>
    <dbReference type="NCBI Taxonomy" id="235279"/>
    <lineage>
        <taxon>Bacteria</taxon>
        <taxon>Pseudomonadati</taxon>
        <taxon>Campylobacterota</taxon>
        <taxon>Epsilonproteobacteria</taxon>
        <taxon>Campylobacterales</taxon>
        <taxon>Helicobacteraceae</taxon>
        <taxon>Helicobacter</taxon>
    </lineage>
</organism>
<proteinExistence type="inferred from homology"/>
<keyword id="KW-0963">Cytoplasm</keyword>
<keyword id="KW-0664">Pyridoxine biosynthesis</keyword>
<keyword id="KW-1185">Reference proteome</keyword>
<keyword id="KW-0808">Transferase</keyword>
<dbReference type="EC" id="2.6.99.2" evidence="1"/>
<dbReference type="EMBL" id="AE017125">
    <property type="protein sequence ID" value="AAP77459.1"/>
    <property type="molecule type" value="Genomic_DNA"/>
</dbReference>
<dbReference type="SMR" id="Q7VHV1"/>
<dbReference type="STRING" id="235279.HH_0862"/>
<dbReference type="KEGG" id="hhe:HH_0862"/>
<dbReference type="eggNOG" id="COG0854">
    <property type="taxonomic scope" value="Bacteria"/>
</dbReference>
<dbReference type="HOGENOM" id="CLU_074563_0_0_7"/>
<dbReference type="UniPathway" id="UPA00244">
    <property type="reaction ID" value="UER00313"/>
</dbReference>
<dbReference type="Proteomes" id="UP000002495">
    <property type="component" value="Chromosome"/>
</dbReference>
<dbReference type="GO" id="GO:0005829">
    <property type="term" value="C:cytosol"/>
    <property type="evidence" value="ECO:0007669"/>
    <property type="project" value="TreeGrafter"/>
</dbReference>
<dbReference type="GO" id="GO:0033856">
    <property type="term" value="F:pyridoxine 5'-phosphate synthase activity"/>
    <property type="evidence" value="ECO:0007669"/>
    <property type="project" value="UniProtKB-EC"/>
</dbReference>
<dbReference type="GO" id="GO:0008615">
    <property type="term" value="P:pyridoxine biosynthetic process"/>
    <property type="evidence" value="ECO:0007669"/>
    <property type="project" value="UniProtKB-UniRule"/>
</dbReference>
<dbReference type="CDD" id="cd00003">
    <property type="entry name" value="PNPsynthase"/>
    <property type="match status" value="1"/>
</dbReference>
<dbReference type="Gene3D" id="3.20.20.70">
    <property type="entry name" value="Aldolase class I"/>
    <property type="match status" value="1"/>
</dbReference>
<dbReference type="HAMAP" id="MF_00279">
    <property type="entry name" value="PdxJ"/>
    <property type="match status" value="1"/>
</dbReference>
<dbReference type="InterPro" id="IPR013785">
    <property type="entry name" value="Aldolase_TIM"/>
</dbReference>
<dbReference type="InterPro" id="IPR004569">
    <property type="entry name" value="PyrdxlP_synth_PdxJ"/>
</dbReference>
<dbReference type="InterPro" id="IPR036130">
    <property type="entry name" value="Pyridoxine-5'_phos_synth"/>
</dbReference>
<dbReference type="NCBIfam" id="TIGR00559">
    <property type="entry name" value="pdxJ"/>
    <property type="match status" value="1"/>
</dbReference>
<dbReference type="NCBIfam" id="NF003625">
    <property type="entry name" value="PRK05265.1-3"/>
    <property type="match status" value="1"/>
</dbReference>
<dbReference type="NCBIfam" id="NF003627">
    <property type="entry name" value="PRK05265.1-5"/>
    <property type="match status" value="1"/>
</dbReference>
<dbReference type="PANTHER" id="PTHR30456">
    <property type="entry name" value="PYRIDOXINE 5'-PHOSPHATE SYNTHASE"/>
    <property type="match status" value="1"/>
</dbReference>
<dbReference type="PANTHER" id="PTHR30456:SF0">
    <property type="entry name" value="PYRIDOXINE 5'-PHOSPHATE SYNTHASE"/>
    <property type="match status" value="1"/>
</dbReference>
<dbReference type="Pfam" id="PF03740">
    <property type="entry name" value="PdxJ"/>
    <property type="match status" value="1"/>
</dbReference>
<dbReference type="SUPFAM" id="SSF63892">
    <property type="entry name" value="Pyridoxine 5'-phosphate synthase"/>
    <property type="match status" value="1"/>
</dbReference>
<name>PDXJ_HELHP</name>
<protein>
    <recommendedName>
        <fullName evidence="1">Pyridoxine 5'-phosphate synthase</fullName>
        <shortName evidence="1">PNP synthase</shortName>
        <ecNumber evidence="1">2.6.99.2</ecNumber>
    </recommendedName>
</protein>